<dbReference type="EC" id="3.1.3.10"/>
<dbReference type="EMBL" id="X68201">
    <property type="protein sequence ID" value="CAA48288.1"/>
    <property type="molecule type" value="Genomic_DNA"/>
</dbReference>
<dbReference type="PIR" id="S25627">
    <property type="entry name" value="S25627"/>
</dbReference>
<dbReference type="SMR" id="Q52309"/>
<dbReference type="STRING" id="587.RB151_014130"/>
<dbReference type="GO" id="GO:0030288">
    <property type="term" value="C:outer membrane-bounded periplasmic space"/>
    <property type="evidence" value="ECO:0007669"/>
    <property type="project" value="TreeGrafter"/>
</dbReference>
<dbReference type="GO" id="GO:0008877">
    <property type="term" value="F:glucose-1-phosphatase activity"/>
    <property type="evidence" value="ECO:0007669"/>
    <property type="project" value="UniProtKB-EC"/>
</dbReference>
<dbReference type="CDD" id="cd07061">
    <property type="entry name" value="HP_HAP_like"/>
    <property type="match status" value="1"/>
</dbReference>
<dbReference type="Gene3D" id="3.40.50.1240">
    <property type="entry name" value="Phosphoglycerate mutase-like"/>
    <property type="match status" value="2"/>
</dbReference>
<dbReference type="InterPro" id="IPR033379">
    <property type="entry name" value="Acid_Pase_AS"/>
</dbReference>
<dbReference type="InterPro" id="IPR000560">
    <property type="entry name" value="His_Pase_clade-2"/>
</dbReference>
<dbReference type="InterPro" id="IPR029033">
    <property type="entry name" value="His_PPase_superfam"/>
</dbReference>
<dbReference type="InterPro" id="IPR050645">
    <property type="entry name" value="Histidine_acid_phosphatase"/>
</dbReference>
<dbReference type="NCBIfam" id="NF007553">
    <property type="entry name" value="PRK10173.1"/>
    <property type="match status" value="1"/>
</dbReference>
<dbReference type="PANTHER" id="PTHR11567">
    <property type="entry name" value="ACID PHOSPHATASE-RELATED"/>
    <property type="match status" value="1"/>
</dbReference>
<dbReference type="PANTHER" id="PTHR11567:SF135">
    <property type="entry name" value="GLUCOSE-1-PHOSPHATASE"/>
    <property type="match status" value="1"/>
</dbReference>
<dbReference type="Pfam" id="PF00328">
    <property type="entry name" value="His_Phos_2"/>
    <property type="match status" value="1"/>
</dbReference>
<dbReference type="SUPFAM" id="SSF53254">
    <property type="entry name" value="Phosphoglycerate mutase-like"/>
    <property type="match status" value="1"/>
</dbReference>
<dbReference type="PROSITE" id="PS00616">
    <property type="entry name" value="HIS_ACID_PHOSPHAT_1"/>
    <property type="match status" value="1"/>
</dbReference>
<dbReference type="PROSITE" id="PS00778">
    <property type="entry name" value="HIS_ACID_PHOSPHAT_2"/>
    <property type="match status" value="1"/>
</dbReference>
<proteinExistence type="inferred from homology"/>
<gene>
    <name type="primary">agp</name>
</gene>
<sequence>MKYKVLTLCLSAALFAPIAPTMASTDNQADMVLDQVLVLSRHNLRTPIVNTGILTEVTDKKWPDWDAKSGYLTTQGGALEVYMGHYFREWIDQNKLLADELCPTSNEDIYLYTNSLQRTIATAQFFAAGAFPGCKVNIHHQPEIGKMDPVFNPIITNGSPEFKQKALAAMDDYLKGLSLKAGYEELDTVLNIKDSQKCKTDKLCNLDSQKNSFIIEADKEPGVSGPLKIANSAVDAIDLQYYEGFPADQVAWGLVDTPEKWKKLNTLKNAYQETLFTPKIIAKNVAHPILNYIDKGFVSVDKGETAKFIFLVGHDSNIASLMSAMDFKPYQLAQQYEHTPIGGKLVFQRWTDKQTKKDFMKVEYVYQTADQLRDNAYLSLETPPKHVTLELKDCPVDKNGYCSWEDFQKVMAKALEQ</sequence>
<organism>
    <name type="scientific">Providencia rettgeri</name>
    <dbReference type="NCBI Taxonomy" id="587"/>
    <lineage>
        <taxon>Bacteria</taxon>
        <taxon>Pseudomonadati</taxon>
        <taxon>Pseudomonadota</taxon>
        <taxon>Gammaproteobacteria</taxon>
        <taxon>Enterobacterales</taxon>
        <taxon>Morganellaceae</taxon>
        <taxon>Providencia</taxon>
    </lineage>
</organism>
<evidence type="ECO:0000250" key="1"/>
<evidence type="ECO:0000255" key="2"/>
<evidence type="ECO:0000305" key="3"/>
<comment type="catalytic activity">
    <reaction>
        <text>alpha-D-glucose 1-phosphate + H2O = D-glucose + phosphate</text>
        <dbReference type="Rhea" id="RHEA:19933"/>
        <dbReference type="ChEBI" id="CHEBI:4167"/>
        <dbReference type="ChEBI" id="CHEBI:15377"/>
        <dbReference type="ChEBI" id="CHEBI:43474"/>
        <dbReference type="ChEBI" id="CHEBI:58601"/>
        <dbReference type="EC" id="3.1.3.10"/>
    </reaction>
</comment>
<comment type="subunit">
    <text evidence="1">Homodimer.</text>
</comment>
<comment type="subcellular location">
    <subcellularLocation>
        <location evidence="1">Periplasm</location>
    </subcellularLocation>
</comment>
<comment type="similarity">
    <text evidence="3">Belongs to the histidine acid phosphatase family.</text>
</comment>
<name>AGP_PRORE</name>
<protein>
    <recommendedName>
        <fullName>Glucose-1-phosphatase</fullName>
        <shortName>G1Pase</shortName>
        <ecNumber>3.1.3.10</ecNumber>
    </recommendedName>
</protein>
<reference key="1">
    <citation type="submission" date="1992-09" db="EMBL/GenBank/DDBJ databases">
        <authorList>
            <person name="Riccio M.L."/>
            <person name="Chiesurin A."/>
            <person name="Lombardi G."/>
            <person name="Satta G."/>
        </authorList>
    </citation>
    <scope>NUCLEOTIDE SEQUENCE [GENOMIC DNA]</scope>
    <source>
        <strain>PV7</strain>
    </source>
</reference>
<keyword id="KW-0378">Hydrolase</keyword>
<keyword id="KW-0574">Periplasm</keyword>
<keyword id="KW-0732">Signal</keyword>
<accession>Q52309</accession>
<feature type="signal peptide" evidence="2">
    <location>
        <begin position="1"/>
        <end position="23"/>
    </location>
</feature>
<feature type="chain" id="PRO_0000023950" description="Glucose-1-phosphatase">
    <location>
        <begin position="24"/>
        <end position="417"/>
    </location>
</feature>
<feature type="active site" description="Nucleophile" evidence="1">
    <location>
        <position position="42"/>
    </location>
</feature>
<feature type="active site" description="Proton donor" evidence="1">
    <location>
        <position position="315"/>
    </location>
</feature>
<feature type="binding site" evidence="1">
    <location>
        <position position="41"/>
    </location>
    <ligand>
        <name>substrate</name>
    </ligand>
</feature>
<feature type="binding site" evidence="1">
    <location>
        <position position="45"/>
    </location>
    <ligand>
        <name>substrate</name>
    </ligand>
</feature>
<feature type="binding site" evidence="1">
    <location>
        <position position="118"/>
    </location>
    <ligand>
        <name>substrate</name>
    </ligand>
</feature>
<feature type="binding site" evidence="1">
    <location>
        <position position="220"/>
    </location>
    <ligand>
        <name>substrate</name>
    </ligand>
</feature>